<dbReference type="EMBL" id="AE004437">
    <property type="protein sequence ID" value="AAG20702.1"/>
    <property type="status" value="ALT_INIT"/>
    <property type="molecule type" value="Genomic_DNA"/>
</dbReference>
<dbReference type="PIR" id="A28459">
    <property type="entry name" value="A28459"/>
</dbReference>
<dbReference type="PIR" id="B84417">
    <property type="entry name" value="B84417"/>
</dbReference>
<dbReference type="RefSeq" id="WP_012289536.1">
    <property type="nucleotide sequence ID" value="NC_002607.1"/>
</dbReference>
<dbReference type="SMR" id="P0DME1"/>
<dbReference type="STRING" id="64091.VNG_2679G"/>
<dbReference type="GlyCosmos" id="P0DME1">
    <property type="glycosylation" value="27 sites, No reported glycans"/>
</dbReference>
<dbReference type="PaxDb" id="64091-VNG_2679G"/>
<dbReference type="GeneID" id="68695155"/>
<dbReference type="KEGG" id="hal:VNG_2679G"/>
<dbReference type="PATRIC" id="fig|64091.14.peg.2081"/>
<dbReference type="HOGENOM" id="CLU_015552_0_0_2"/>
<dbReference type="InParanoid" id="P0DME1"/>
<dbReference type="OrthoDB" id="242828at2157"/>
<dbReference type="Proteomes" id="UP000000554">
    <property type="component" value="Chromosome"/>
</dbReference>
<dbReference type="GO" id="GO:0005576">
    <property type="term" value="C:extracellular region"/>
    <property type="evidence" value="ECO:0007669"/>
    <property type="project" value="UniProtKB-KW"/>
</dbReference>
<dbReference type="GO" id="GO:0005886">
    <property type="term" value="C:plasma membrane"/>
    <property type="evidence" value="ECO:0007669"/>
    <property type="project" value="UniProtKB-SubCell"/>
</dbReference>
<dbReference type="GO" id="GO:0030115">
    <property type="term" value="C:S-layer"/>
    <property type="evidence" value="ECO:0007669"/>
    <property type="project" value="UniProtKB-SubCell"/>
</dbReference>
<dbReference type="GO" id="GO:0071555">
    <property type="term" value="P:cell wall organization"/>
    <property type="evidence" value="ECO:0007669"/>
    <property type="project" value="UniProtKB-KW"/>
</dbReference>
<dbReference type="InterPro" id="IPR026458">
    <property type="entry name" value="Csg_halobact"/>
</dbReference>
<dbReference type="InterPro" id="IPR026371">
    <property type="entry name" value="PGF_CTERM"/>
</dbReference>
<dbReference type="InterPro" id="IPR026452">
    <property type="entry name" value="Surf_glycop_sig_pep"/>
</dbReference>
<dbReference type="NCBIfam" id="TIGR04207">
    <property type="entry name" value="halo_sig_pep"/>
    <property type="match status" value="1"/>
</dbReference>
<dbReference type="NCBIfam" id="TIGR04216">
    <property type="entry name" value="halo_surf_glyco"/>
    <property type="match status" value="1"/>
</dbReference>
<dbReference type="NCBIfam" id="TIGR04126">
    <property type="entry name" value="PGF_CTERM"/>
    <property type="match status" value="1"/>
</dbReference>
<dbReference type="Pfam" id="PF18204">
    <property type="entry name" value="PGF-CTERM"/>
    <property type="match status" value="1"/>
</dbReference>
<reference key="1">
    <citation type="journal article" date="2000" name="Proc. Natl. Acad. Sci. U.S.A.">
        <title>Genome sequence of Halobacterium species NRC-1.</title>
        <authorList>
            <person name="Ng W.V."/>
            <person name="Kennedy S.P."/>
            <person name="Mahairas G.G."/>
            <person name="Berquist B."/>
            <person name="Pan M."/>
            <person name="Shukla H.D."/>
            <person name="Lasky S.R."/>
            <person name="Baliga N.S."/>
            <person name="Thorsson V."/>
            <person name="Sbrogna J."/>
            <person name="Swartzell S."/>
            <person name="Weir D."/>
            <person name="Hall J."/>
            <person name="Dahl T.A."/>
            <person name="Welti R."/>
            <person name="Goo Y.A."/>
            <person name="Leithauser B."/>
            <person name="Keller K."/>
            <person name="Cruz R."/>
            <person name="Danson M.J."/>
            <person name="Hough D.W."/>
            <person name="Maddocks D.G."/>
            <person name="Jablonski P.E."/>
            <person name="Krebs M.P."/>
            <person name="Angevine C.M."/>
            <person name="Dale H."/>
            <person name="Isenbarger T.A."/>
            <person name="Peck R.F."/>
            <person name="Pohlschroder M."/>
            <person name="Spudich J.L."/>
            <person name="Jung K.-H."/>
            <person name="Alam M."/>
            <person name="Freitas T."/>
            <person name="Hou S."/>
            <person name="Daniels C.J."/>
            <person name="Dennis P.P."/>
            <person name="Omer A.D."/>
            <person name="Ebhardt H."/>
            <person name="Lowe T.M."/>
            <person name="Liang P."/>
            <person name="Riley M."/>
            <person name="Hood L."/>
            <person name="DasSarma S."/>
        </authorList>
    </citation>
    <scope>NUCLEOTIDE SEQUENCE [LARGE SCALE GENOMIC DNA]</scope>
    <source>
        <strain>ATCC 700922 / JCM 11081 / NRC-1</strain>
    </source>
</reference>
<reference key="2">
    <citation type="journal article" date="1989" name="Annu. Rev. Biochem.">
        <title>Structure and biosynthesis of prokaryotic glycoproteins.</title>
        <authorList>
            <person name="Lechner J."/>
            <person name="Wieland F."/>
        </authorList>
    </citation>
    <scope>REVIEW</scope>
</reference>
<protein>
    <recommendedName>
        <fullName>Cell surface glycoprotein</fullName>
    </recommendedName>
    <alternativeName>
        <fullName>S-layer glycoprotein</fullName>
    </alternativeName>
</protein>
<feature type="signal peptide" evidence="2">
    <location>
        <begin position="1"/>
        <end position="34"/>
    </location>
</feature>
<feature type="chain" id="PRO_0000032616" description="Cell surface glycoprotein">
    <location>
        <begin position="35"/>
        <end status="unknown"/>
    </location>
</feature>
<feature type="propeptide" id="PRO_0000444306" description="Removed by archaeosortase" evidence="3">
    <location>
        <begin status="unknown"/>
        <end position="852"/>
    </location>
</feature>
<feature type="transmembrane region" description="Helical" evidence="4">
    <location>
        <begin position="829"/>
        <end position="849"/>
    </location>
</feature>
<feature type="region of interest" description="Disordered" evidence="5">
    <location>
        <begin position="84"/>
        <end position="131"/>
    </location>
</feature>
<feature type="region of interest" description="Disordered" evidence="5">
    <location>
        <begin position="772"/>
        <end position="828"/>
    </location>
</feature>
<feature type="short sequence motif" description="PGF sorting signal" evidence="3">
    <location>
        <begin position="830"/>
        <end position="832"/>
    </location>
</feature>
<feature type="compositionally biased region" description="Polar residues" evidence="5">
    <location>
        <begin position="115"/>
        <end position="126"/>
    </location>
</feature>
<feature type="compositionally biased region" description="Low complexity" evidence="5">
    <location>
        <begin position="785"/>
        <end position="823"/>
    </location>
</feature>
<feature type="glycosylation site" description="N-linked (GalNAc...) (glycosaminoglycan) asparagine" evidence="1">
    <location>
        <position position="36"/>
    </location>
</feature>
<feature type="glycosylation site" description="N-linked (Glc...) asparagine" evidence="1">
    <location>
        <position position="339"/>
    </location>
</feature>
<feature type="glycosylation site" description="N-linked (Glc...) asparagine" evidence="1">
    <location>
        <position position="398"/>
    </location>
</feature>
<feature type="glycosylation site" description="N-linked (Glc...) asparagine" evidence="1">
    <location>
        <position position="438"/>
    </location>
</feature>
<feature type="glycosylation site" description="N-linked (Glc...) asparagine" evidence="1">
    <location>
        <position position="513"/>
    </location>
</feature>
<feature type="glycosylation site" description="N-linked (Glc...) asparagine" evidence="1">
    <location>
        <position position="643"/>
    </location>
</feature>
<feature type="glycosylation site" description="N-linked (Glc...) asparagine" evidence="1">
    <location>
        <position position="727"/>
    </location>
</feature>
<feature type="glycosylation site" description="N-linked (Glc...) asparagine" evidence="1">
    <location>
        <position position="751"/>
    </location>
</feature>
<feature type="glycosylation site" description="N-linked (Glc...) asparagine" evidence="1">
    <location>
        <position position="787"/>
    </location>
</feature>
<feature type="glycosylation site" description="O-linked (Gal...) threonine" evidence="1">
    <location>
        <position position="789"/>
    </location>
</feature>
<feature type="glycosylation site" description="O-linked (Gal...) threonine" evidence="1">
    <location>
        <position position="791"/>
    </location>
</feature>
<feature type="glycosylation site" description="O-linked (Gal...) threonine" evidence="1">
    <location>
        <position position="792"/>
    </location>
</feature>
<feature type="glycosylation site" description="O-linked (Gal...) threonine" evidence="1">
    <location>
        <position position="793"/>
    </location>
</feature>
<feature type="glycosylation site" description="O-linked (Gal...) threonine" evidence="1">
    <location>
        <position position="795"/>
    </location>
</feature>
<feature type="glycosylation site" description="O-linked (Gal...) threonine" evidence="1">
    <location>
        <position position="797"/>
    </location>
</feature>
<feature type="glycosylation site" description="O-linked (Gal...) threonine" evidence="1">
    <location>
        <position position="798"/>
    </location>
</feature>
<feature type="glycosylation site" description="O-linked (Gal...) threonine" evidence="1">
    <location>
        <position position="799"/>
    </location>
</feature>
<feature type="glycosylation site" description="O-linked (Gal...) threonine" evidence="1">
    <location>
        <position position="801"/>
    </location>
</feature>
<feature type="glycosylation site" description="O-linked (Gal...) threonine" evidence="1">
    <location>
        <position position="802"/>
    </location>
</feature>
<feature type="glycosylation site" description="O-linked (Gal...) threonine" evidence="1">
    <location>
        <position position="803"/>
    </location>
</feature>
<feature type="glycosylation site" description="O-linked (Gal...) threonine" evidence="1">
    <location>
        <position position="806"/>
    </location>
</feature>
<feature type="glycosylation site" description="O-linked (Gal...) threonine" evidence="1">
    <location>
        <position position="807"/>
    </location>
</feature>
<feature type="glycosylation site" description="O-linked (Gal...) threonine" evidence="1">
    <location>
        <position position="808"/>
    </location>
</feature>
<feature type="glycosylation site" description="N-linked (Glc...) asparagine" evidence="1">
    <location>
        <position position="811"/>
    </location>
</feature>
<feature type="glycosylation site" description="O-linked (Gal...) threonine" evidence="1">
    <location>
        <position position="812"/>
    </location>
</feature>
<feature type="glycosylation site" description="O-linked (Gal...) threonine" evidence="1">
    <location>
        <position position="813"/>
    </location>
</feature>
<feature type="glycosylation site" description="N-linked (Glc...) asparagine" evidence="1">
    <location>
        <position position="815"/>
    </location>
</feature>
<evidence type="ECO:0000250" key="1"/>
<evidence type="ECO:0000250" key="2">
    <source>
        <dbReference type="UniProtKB" id="B0R8E4"/>
    </source>
</evidence>
<evidence type="ECO:0000250" key="3">
    <source>
        <dbReference type="UniProtKB" id="P25062"/>
    </source>
</evidence>
<evidence type="ECO:0000255" key="4"/>
<evidence type="ECO:0000256" key="5">
    <source>
        <dbReference type="SAM" id="MobiDB-lite"/>
    </source>
</evidence>
<evidence type="ECO:0000305" key="6"/>
<accession>P0DME1</accession>
<accession>P08198</accession>
<accession>Q9HM69</accession>
<keyword id="KW-1003">Cell membrane</keyword>
<keyword id="KW-0134">Cell wall</keyword>
<keyword id="KW-0961">Cell wall biogenesis/degradation</keyword>
<keyword id="KW-0325">Glycoprotein</keyword>
<keyword id="KW-0472">Membrane</keyword>
<keyword id="KW-0654">Proteoglycan</keyword>
<keyword id="KW-1185">Reference proteome</keyword>
<keyword id="KW-0701">S-layer</keyword>
<keyword id="KW-0964">Secreted</keyword>
<keyword id="KW-0732">Signal</keyword>
<keyword id="KW-0812">Transmembrane</keyword>
<keyword id="KW-1133">Transmembrane helix</keyword>
<gene>
    <name type="primary">csg</name>
    <name type="ordered locus">VNG_2679G</name>
</gene>
<name>CSG_HALSA</name>
<organism>
    <name type="scientific">Halobacterium salinarum (strain ATCC 700922 / JCM 11081 / NRC-1)</name>
    <name type="common">Halobacterium halobium</name>
    <dbReference type="NCBI Taxonomy" id="64091"/>
    <lineage>
        <taxon>Archaea</taxon>
        <taxon>Methanobacteriati</taxon>
        <taxon>Methanobacteriota</taxon>
        <taxon>Stenosarchaea group</taxon>
        <taxon>Halobacteria</taxon>
        <taxon>Halobacteriales</taxon>
        <taxon>Halobacteriaceae</taxon>
        <taxon>Halobacterium</taxon>
        <taxon>Halobacterium salinarum NRC-34001</taxon>
    </lineage>
</organism>
<sequence length="852" mass="89758">MTDTTGKLRAVLLTALMVGSVIGAGVAFTGGAAAANASDLNDYQRFNENTNYTYSTASEDGKTEGSVASGATIFQGEEDVTFRKLDNEKEVSPATLSRTGGSDEGVPLQMPIPEDQSTGSYDSNGPDNDEADFGVTVQSPSVTMLEVRNNADNDVTGGVLNTQQDESSIAVDYNYYAAEDLELTVEDEDGLDVTDEILAADQSGGAYEDGTGNNGPNTLRFDIDPNNVDAGDYTVSVEGVEDLDFGDATESASVTISSSNKASLNLAEDEVVQGANLKYTIENSPEGNYHAVTIDSSDFRDSSSGADAAKVMRSVGDTVDTGLVVDNDSTTEIVDDYENTSISDVDYAYAIVEIDDGNGVGSIETQYLDDSSADIDLYPASDTEDAPDYVNSNEELTNGSALDGVSTDDDTDFDVTQGDITLDNPTGAYVVGSEVDINGTANEGTDDVVLYARDNNDFELVTVDGEKSIEVDSDDTFEEEDITLSDGDKGGDDILGLPGTYRLGIIAKSDAVNSSGGVKDNIDTSDFNQGVSSTSSIRVTDTELTASFETYNGQVADDDNQIDVEGTAPGKDNVAAIIIGSRGKVKFQSISVDSDDTFDEEDIDISELRQGSASAHILSSGRDGKFGEDTANSISDLEDEVGNYTSGSPTGDQIRDRILSNTVDDTASDDLIVTQQFRLVDGLTTIEATEGGEAGGSLTVMGTTNRKADDNTITVELLQGDASIEINSTDEWNSDGQWSVDVPLSNVEPGNYTVEADDGDNTDRQNVEIVEELEEPDQTTVDQPENNQTMTTTMTETTTETTTEMTTTQENTTENGSEGTSDGESGGSIPGFGVGVALVAVLGAALLALRQN</sequence>
<proteinExistence type="inferred from homology"/>
<comment type="function">
    <text evidence="3">S-layer protein. The S-layer is a paracrystalline mono-layered assembly of proteins which coat the surface of the cell.</text>
</comment>
<comment type="subcellular location">
    <subcellularLocation>
        <location evidence="3">Secreted</location>
        <location evidence="3">Cell wall</location>
        <location evidence="3">S-layer</location>
    </subcellularLocation>
    <subcellularLocation>
        <location evidence="3">Cell membrane</location>
    </subcellularLocation>
</comment>
<comment type="PTM">
    <text evidence="3">Glycosylated.</text>
</comment>
<comment type="PTM">
    <text evidence="3">Cleaved by the archaeosortase ArtA at the C-terminus, with removal of a short hydrophobic segment.</text>
</comment>
<comment type="PTM">
    <text evidence="3">Lipidation.</text>
</comment>
<comment type="similarity">
    <text evidence="6">Belongs to the halobacterial S-layer protein family.</text>
</comment>
<comment type="sequence caution" evidence="6">
    <conflict type="erroneous initiation">
        <sequence resource="EMBL-CDS" id="AAG20702"/>
    </conflict>
</comment>